<reference key="1">
    <citation type="journal article" date="1997" name="Nature">
        <title>The complete genome sequence of the Gram-positive bacterium Bacillus subtilis.</title>
        <authorList>
            <person name="Kunst F."/>
            <person name="Ogasawara N."/>
            <person name="Moszer I."/>
            <person name="Albertini A.M."/>
            <person name="Alloni G."/>
            <person name="Azevedo V."/>
            <person name="Bertero M.G."/>
            <person name="Bessieres P."/>
            <person name="Bolotin A."/>
            <person name="Borchert S."/>
            <person name="Borriss R."/>
            <person name="Boursier L."/>
            <person name="Brans A."/>
            <person name="Braun M."/>
            <person name="Brignell S.C."/>
            <person name="Bron S."/>
            <person name="Brouillet S."/>
            <person name="Bruschi C.V."/>
            <person name="Caldwell B."/>
            <person name="Capuano V."/>
            <person name="Carter N.M."/>
            <person name="Choi S.-K."/>
            <person name="Codani J.-J."/>
            <person name="Connerton I.F."/>
            <person name="Cummings N.J."/>
            <person name="Daniel R.A."/>
            <person name="Denizot F."/>
            <person name="Devine K.M."/>
            <person name="Duesterhoeft A."/>
            <person name="Ehrlich S.D."/>
            <person name="Emmerson P.T."/>
            <person name="Entian K.-D."/>
            <person name="Errington J."/>
            <person name="Fabret C."/>
            <person name="Ferrari E."/>
            <person name="Foulger D."/>
            <person name="Fritz C."/>
            <person name="Fujita M."/>
            <person name="Fujita Y."/>
            <person name="Fuma S."/>
            <person name="Galizzi A."/>
            <person name="Galleron N."/>
            <person name="Ghim S.-Y."/>
            <person name="Glaser P."/>
            <person name="Goffeau A."/>
            <person name="Golightly E.J."/>
            <person name="Grandi G."/>
            <person name="Guiseppi G."/>
            <person name="Guy B.J."/>
            <person name="Haga K."/>
            <person name="Haiech J."/>
            <person name="Harwood C.R."/>
            <person name="Henaut A."/>
            <person name="Hilbert H."/>
            <person name="Holsappel S."/>
            <person name="Hosono S."/>
            <person name="Hullo M.-F."/>
            <person name="Itaya M."/>
            <person name="Jones L.-M."/>
            <person name="Joris B."/>
            <person name="Karamata D."/>
            <person name="Kasahara Y."/>
            <person name="Klaerr-Blanchard M."/>
            <person name="Klein C."/>
            <person name="Kobayashi Y."/>
            <person name="Koetter P."/>
            <person name="Koningstein G."/>
            <person name="Krogh S."/>
            <person name="Kumano M."/>
            <person name="Kurita K."/>
            <person name="Lapidus A."/>
            <person name="Lardinois S."/>
            <person name="Lauber J."/>
            <person name="Lazarevic V."/>
            <person name="Lee S.-M."/>
            <person name="Levine A."/>
            <person name="Liu H."/>
            <person name="Masuda S."/>
            <person name="Mauel C."/>
            <person name="Medigue C."/>
            <person name="Medina N."/>
            <person name="Mellado R.P."/>
            <person name="Mizuno M."/>
            <person name="Moestl D."/>
            <person name="Nakai S."/>
            <person name="Noback M."/>
            <person name="Noone D."/>
            <person name="O'Reilly M."/>
            <person name="Ogawa K."/>
            <person name="Ogiwara A."/>
            <person name="Oudega B."/>
            <person name="Park S.-H."/>
            <person name="Parro V."/>
            <person name="Pohl T.M."/>
            <person name="Portetelle D."/>
            <person name="Porwollik S."/>
            <person name="Prescott A.M."/>
            <person name="Presecan E."/>
            <person name="Pujic P."/>
            <person name="Purnelle B."/>
            <person name="Rapoport G."/>
            <person name="Rey M."/>
            <person name="Reynolds S."/>
            <person name="Rieger M."/>
            <person name="Rivolta C."/>
            <person name="Rocha E."/>
            <person name="Roche B."/>
            <person name="Rose M."/>
            <person name="Sadaie Y."/>
            <person name="Sato T."/>
            <person name="Scanlan E."/>
            <person name="Schleich S."/>
            <person name="Schroeter R."/>
            <person name="Scoffone F."/>
            <person name="Sekiguchi J."/>
            <person name="Sekowska A."/>
            <person name="Seror S.J."/>
            <person name="Serror P."/>
            <person name="Shin B.-S."/>
            <person name="Soldo B."/>
            <person name="Sorokin A."/>
            <person name="Tacconi E."/>
            <person name="Takagi T."/>
            <person name="Takahashi H."/>
            <person name="Takemaru K."/>
            <person name="Takeuchi M."/>
            <person name="Tamakoshi A."/>
            <person name="Tanaka T."/>
            <person name="Terpstra P."/>
            <person name="Tognoni A."/>
            <person name="Tosato V."/>
            <person name="Uchiyama S."/>
            <person name="Vandenbol M."/>
            <person name="Vannier F."/>
            <person name="Vassarotti A."/>
            <person name="Viari A."/>
            <person name="Wambutt R."/>
            <person name="Wedler E."/>
            <person name="Wedler H."/>
            <person name="Weitzenegger T."/>
            <person name="Winters P."/>
            <person name="Wipat A."/>
            <person name="Yamamoto H."/>
            <person name="Yamane K."/>
            <person name="Yasumoto K."/>
            <person name="Yata K."/>
            <person name="Yoshida K."/>
            <person name="Yoshikawa H.-F."/>
            <person name="Zumstein E."/>
            <person name="Yoshikawa H."/>
            <person name="Danchin A."/>
        </authorList>
    </citation>
    <scope>NUCLEOTIDE SEQUENCE [LARGE SCALE GENOMIC DNA]</scope>
    <source>
        <strain>168</strain>
    </source>
</reference>
<gene>
    <name type="primary">yozN</name>
    <name type="ordered locus">BSU19270</name>
</gene>
<name>YOZN_BACSU</name>
<dbReference type="EMBL" id="AL009126">
    <property type="protein sequence ID" value="CAB13819.1"/>
    <property type="molecule type" value="Genomic_DNA"/>
</dbReference>
<dbReference type="PIR" id="B69932">
    <property type="entry name" value="B69932"/>
</dbReference>
<dbReference type="RefSeq" id="NP_389809.1">
    <property type="nucleotide sequence ID" value="NC_000964.3"/>
</dbReference>
<dbReference type="RefSeq" id="WP_004399338.1">
    <property type="nucleotide sequence ID" value="NZ_OZ025638.1"/>
</dbReference>
<dbReference type="FunCoup" id="O31846">
    <property type="interactions" value="68"/>
</dbReference>
<dbReference type="STRING" id="224308.BSU19270"/>
<dbReference type="PaxDb" id="224308-BSU19270"/>
<dbReference type="EnsemblBacteria" id="CAB13819">
    <property type="protein sequence ID" value="CAB13819"/>
    <property type="gene ID" value="BSU_19270"/>
</dbReference>
<dbReference type="GeneID" id="939679"/>
<dbReference type="KEGG" id="bsu:BSU19270"/>
<dbReference type="PATRIC" id="fig|224308.179.peg.2108"/>
<dbReference type="eggNOG" id="ENOG5033BND">
    <property type="taxonomic scope" value="Bacteria"/>
</dbReference>
<dbReference type="InParanoid" id="O31846"/>
<dbReference type="OrthoDB" id="1809291at2"/>
<dbReference type="BioCyc" id="BSUB:BSU19270-MONOMER"/>
<dbReference type="Proteomes" id="UP000001570">
    <property type="component" value="Chromosome"/>
</dbReference>
<protein>
    <recommendedName>
        <fullName>Uncharacterized protein YozN</fullName>
    </recommendedName>
</protein>
<feature type="chain" id="PRO_0000049672" description="Uncharacterized protein YozN">
    <location>
        <begin position="1"/>
        <end position="87"/>
    </location>
</feature>
<feature type="region of interest" description="Disordered" evidence="1">
    <location>
        <begin position="43"/>
        <end position="87"/>
    </location>
</feature>
<accession>O31846</accession>
<evidence type="ECO:0000256" key="1">
    <source>
        <dbReference type="SAM" id="MobiDB-lite"/>
    </source>
</evidence>
<keyword id="KW-1185">Reference proteome</keyword>
<proteinExistence type="predicted"/>
<sequence>MVQPTPYININIFMLKINSFENASAVNVGQNLLAEWQNSDKKNQGYGQNFGDASGFMGTRSHVDDRDQIDSPASFESEAVNSSIKRK</sequence>
<organism>
    <name type="scientific">Bacillus subtilis (strain 168)</name>
    <dbReference type="NCBI Taxonomy" id="224308"/>
    <lineage>
        <taxon>Bacteria</taxon>
        <taxon>Bacillati</taxon>
        <taxon>Bacillota</taxon>
        <taxon>Bacilli</taxon>
        <taxon>Bacillales</taxon>
        <taxon>Bacillaceae</taxon>
        <taxon>Bacillus</taxon>
    </lineage>
</organism>